<feature type="chain" id="PRO_1000063595" description="3-isopropylmalate dehydratase large subunit">
    <location>
        <begin position="1"/>
        <end position="472"/>
    </location>
</feature>
<feature type="binding site" evidence="1">
    <location>
        <position position="353"/>
    </location>
    <ligand>
        <name>[4Fe-4S] cluster</name>
        <dbReference type="ChEBI" id="CHEBI:49883"/>
    </ligand>
</feature>
<feature type="binding site" evidence="1">
    <location>
        <position position="414"/>
    </location>
    <ligand>
        <name>[4Fe-4S] cluster</name>
        <dbReference type="ChEBI" id="CHEBI:49883"/>
    </ligand>
</feature>
<feature type="binding site" evidence="1">
    <location>
        <position position="417"/>
    </location>
    <ligand>
        <name>[4Fe-4S] cluster</name>
        <dbReference type="ChEBI" id="CHEBI:49883"/>
    </ligand>
</feature>
<keyword id="KW-0004">4Fe-4S</keyword>
<keyword id="KW-0028">Amino-acid biosynthesis</keyword>
<keyword id="KW-0100">Branched-chain amino acid biosynthesis</keyword>
<keyword id="KW-0408">Iron</keyword>
<keyword id="KW-0411">Iron-sulfur</keyword>
<keyword id="KW-0432">Leucine biosynthesis</keyword>
<keyword id="KW-0456">Lyase</keyword>
<keyword id="KW-0479">Metal-binding</keyword>
<reference key="1">
    <citation type="submission" date="2006-03" db="EMBL/GenBank/DDBJ databases">
        <title>Complete sequence of chromosome of Psychrobacter cryohalolentis K5.</title>
        <authorList>
            <consortium name="US DOE Joint Genome Institute"/>
            <person name="Copeland A."/>
            <person name="Lucas S."/>
            <person name="Lapidus A."/>
            <person name="Barry K."/>
            <person name="Detter J.C."/>
            <person name="Glavina T."/>
            <person name="Hammon N."/>
            <person name="Israni S."/>
            <person name="Dalin E."/>
            <person name="Tice H."/>
            <person name="Pitluck S."/>
            <person name="Brettin T."/>
            <person name="Bruce D."/>
            <person name="Han C."/>
            <person name="Tapia R."/>
            <person name="Sims D.R."/>
            <person name="Gilna P."/>
            <person name="Schmutz J."/>
            <person name="Larimer F."/>
            <person name="Land M."/>
            <person name="Hauser L."/>
            <person name="Kyrpides N."/>
            <person name="Kim E."/>
            <person name="Richardson P."/>
        </authorList>
    </citation>
    <scope>NUCLEOTIDE SEQUENCE [LARGE SCALE GENOMIC DNA]</scope>
    <source>
        <strain>ATCC BAA-1226 / DSM 17306 / VKM B-2378 / K5</strain>
    </source>
</reference>
<dbReference type="EC" id="4.2.1.33" evidence="1"/>
<dbReference type="EMBL" id="CP000323">
    <property type="protein sequence ID" value="ABE75351.1"/>
    <property type="molecule type" value="Genomic_DNA"/>
</dbReference>
<dbReference type="RefSeq" id="WP_011513902.1">
    <property type="nucleotide sequence ID" value="NC_007969.1"/>
</dbReference>
<dbReference type="SMR" id="Q1QAF2"/>
<dbReference type="STRING" id="335284.Pcryo_1574"/>
<dbReference type="KEGG" id="pcr:Pcryo_1574"/>
<dbReference type="eggNOG" id="COG0065">
    <property type="taxonomic scope" value="Bacteria"/>
</dbReference>
<dbReference type="HOGENOM" id="CLU_006714_3_4_6"/>
<dbReference type="UniPathway" id="UPA00048">
    <property type="reaction ID" value="UER00071"/>
</dbReference>
<dbReference type="Proteomes" id="UP000002425">
    <property type="component" value="Chromosome"/>
</dbReference>
<dbReference type="GO" id="GO:0003861">
    <property type="term" value="F:3-isopropylmalate dehydratase activity"/>
    <property type="evidence" value="ECO:0007669"/>
    <property type="project" value="UniProtKB-UniRule"/>
</dbReference>
<dbReference type="GO" id="GO:0051539">
    <property type="term" value="F:4 iron, 4 sulfur cluster binding"/>
    <property type="evidence" value="ECO:0007669"/>
    <property type="project" value="UniProtKB-KW"/>
</dbReference>
<dbReference type="GO" id="GO:0046872">
    <property type="term" value="F:metal ion binding"/>
    <property type="evidence" value="ECO:0007669"/>
    <property type="project" value="UniProtKB-KW"/>
</dbReference>
<dbReference type="GO" id="GO:0009098">
    <property type="term" value="P:L-leucine biosynthetic process"/>
    <property type="evidence" value="ECO:0007669"/>
    <property type="project" value="UniProtKB-UniRule"/>
</dbReference>
<dbReference type="CDD" id="cd01583">
    <property type="entry name" value="IPMI"/>
    <property type="match status" value="1"/>
</dbReference>
<dbReference type="FunFam" id="3.30.499.10:FF:000007">
    <property type="entry name" value="3-isopropylmalate dehydratase large subunit"/>
    <property type="match status" value="1"/>
</dbReference>
<dbReference type="Gene3D" id="3.30.499.10">
    <property type="entry name" value="Aconitase, domain 3"/>
    <property type="match status" value="2"/>
</dbReference>
<dbReference type="HAMAP" id="MF_01026">
    <property type="entry name" value="LeuC_type1"/>
    <property type="match status" value="1"/>
</dbReference>
<dbReference type="InterPro" id="IPR004430">
    <property type="entry name" value="3-IsopropMal_deHydase_lsu"/>
</dbReference>
<dbReference type="InterPro" id="IPR015931">
    <property type="entry name" value="Acnase/IPM_dHydase_lsu_aba_1/3"/>
</dbReference>
<dbReference type="InterPro" id="IPR001030">
    <property type="entry name" value="Acoase/IPM_deHydtase_lsu_aba"/>
</dbReference>
<dbReference type="InterPro" id="IPR018136">
    <property type="entry name" value="Aconitase_4Fe-4S_BS"/>
</dbReference>
<dbReference type="InterPro" id="IPR036008">
    <property type="entry name" value="Aconitase_4Fe-4S_dom"/>
</dbReference>
<dbReference type="InterPro" id="IPR050067">
    <property type="entry name" value="IPM_dehydratase_rel_enz"/>
</dbReference>
<dbReference type="InterPro" id="IPR033941">
    <property type="entry name" value="IPMI_cat"/>
</dbReference>
<dbReference type="NCBIfam" id="TIGR00170">
    <property type="entry name" value="leuC"/>
    <property type="match status" value="1"/>
</dbReference>
<dbReference type="NCBIfam" id="NF004016">
    <property type="entry name" value="PRK05478.1"/>
    <property type="match status" value="1"/>
</dbReference>
<dbReference type="NCBIfam" id="NF009116">
    <property type="entry name" value="PRK12466.1"/>
    <property type="match status" value="1"/>
</dbReference>
<dbReference type="PANTHER" id="PTHR43822:SF9">
    <property type="entry name" value="3-ISOPROPYLMALATE DEHYDRATASE"/>
    <property type="match status" value="1"/>
</dbReference>
<dbReference type="PANTHER" id="PTHR43822">
    <property type="entry name" value="HOMOACONITASE, MITOCHONDRIAL-RELATED"/>
    <property type="match status" value="1"/>
</dbReference>
<dbReference type="Pfam" id="PF00330">
    <property type="entry name" value="Aconitase"/>
    <property type="match status" value="1"/>
</dbReference>
<dbReference type="PRINTS" id="PR00415">
    <property type="entry name" value="ACONITASE"/>
</dbReference>
<dbReference type="SUPFAM" id="SSF53732">
    <property type="entry name" value="Aconitase iron-sulfur domain"/>
    <property type="match status" value="1"/>
</dbReference>
<dbReference type="PROSITE" id="PS00450">
    <property type="entry name" value="ACONITASE_1"/>
    <property type="match status" value="1"/>
</dbReference>
<dbReference type="PROSITE" id="PS01244">
    <property type="entry name" value="ACONITASE_2"/>
    <property type="match status" value="1"/>
</dbReference>
<evidence type="ECO:0000255" key="1">
    <source>
        <dbReference type="HAMAP-Rule" id="MF_01026"/>
    </source>
</evidence>
<organism>
    <name type="scientific">Psychrobacter cryohalolentis (strain ATCC BAA-1226 / DSM 17306 / VKM B-2378 / K5)</name>
    <dbReference type="NCBI Taxonomy" id="335284"/>
    <lineage>
        <taxon>Bacteria</taxon>
        <taxon>Pseudomonadati</taxon>
        <taxon>Pseudomonadota</taxon>
        <taxon>Gammaproteobacteria</taxon>
        <taxon>Moraxellales</taxon>
        <taxon>Moraxellaceae</taxon>
        <taxon>Psychrobacter</taxon>
    </lineage>
</organism>
<sequence>MAGQTLYDKLWNAHEVTKRDDGSSLIYIDRHLLHEVTSPQAFEGLELANRAPWRLSANIASPDHNVPTVTKERSEGVAGIKDKVSRLQVLTLDDNCAKFDIAEFTINDARQGILHVVGPEQGLVLPGMTVVCGDSHTATHGALGCLAHGIGTSEVEHVLATQCLIQKKSKNMQIRVTGELGAGVTSKDVVLAIIAKIGTAGGTGHAIEFAGQVFEDMSMEGRMTVCNMAIEAGARVGMVAVDDTTIDYVKGRPYAPNESQWQQAEAYWRTFYSDDDAVFDSVIEIDGSQIAPQVSWGTSPEMVVDITQSVPTPDQAIDEAQEEGWLRAYTYMGLEAGQKITDIQLDRIFIGSCTNSRIEDLRDAAAVIKGRKVADTIKEAIVVAGSGQVKLQAEAEGLDALFTDAGFEWREPGCSMCLAMNADKLEPQEHCASTSNRNFEGRQGNGGRTHLVSPAMAAAAALAGHFVDVRTF</sequence>
<accession>Q1QAF2</accession>
<protein>
    <recommendedName>
        <fullName evidence="1">3-isopropylmalate dehydratase large subunit</fullName>
        <ecNumber evidence="1">4.2.1.33</ecNumber>
    </recommendedName>
    <alternativeName>
        <fullName evidence="1">Alpha-IPM isomerase</fullName>
        <shortName evidence="1">IPMI</shortName>
    </alternativeName>
    <alternativeName>
        <fullName evidence="1">Isopropylmalate isomerase</fullName>
    </alternativeName>
</protein>
<gene>
    <name evidence="1" type="primary">leuC</name>
    <name type="ordered locus">Pcryo_1574</name>
</gene>
<proteinExistence type="inferred from homology"/>
<comment type="function">
    <text evidence="1">Catalyzes the isomerization between 2-isopropylmalate and 3-isopropylmalate, via the formation of 2-isopropylmaleate.</text>
</comment>
<comment type="catalytic activity">
    <reaction evidence="1">
        <text>(2R,3S)-3-isopropylmalate = (2S)-2-isopropylmalate</text>
        <dbReference type="Rhea" id="RHEA:32287"/>
        <dbReference type="ChEBI" id="CHEBI:1178"/>
        <dbReference type="ChEBI" id="CHEBI:35121"/>
        <dbReference type="EC" id="4.2.1.33"/>
    </reaction>
</comment>
<comment type="cofactor">
    <cofactor evidence="1">
        <name>[4Fe-4S] cluster</name>
        <dbReference type="ChEBI" id="CHEBI:49883"/>
    </cofactor>
    <text evidence="1">Binds 1 [4Fe-4S] cluster per subunit.</text>
</comment>
<comment type="pathway">
    <text evidence="1">Amino-acid biosynthesis; L-leucine biosynthesis; L-leucine from 3-methyl-2-oxobutanoate: step 2/4.</text>
</comment>
<comment type="subunit">
    <text evidence="1">Heterodimer of LeuC and LeuD.</text>
</comment>
<comment type="similarity">
    <text evidence="1">Belongs to the aconitase/IPM isomerase family. LeuC type 1 subfamily.</text>
</comment>
<name>LEUC_PSYCK</name>